<feature type="chain" id="PRO_0000127205" description="Transcription factor HES-1">
    <location>
        <begin position="1"/>
        <end position="290"/>
    </location>
</feature>
<feature type="domain" description="bHLH" evidence="3">
    <location>
        <begin position="35"/>
        <end position="92"/>
    </location>
</feature>
<feature type="domain" description="Orange" evidence="2">
    <location>
        <begin position="111"/>
        <end position="144"/>
    </location>
</feature>
<feature type="region of interest" description="Disordered" evidence="4">
    <location>
        <begin position="1"/>
        <end position="47"/>
    </location>
</feature>
<feature type="short sequence motif" description="WRPW motif">
    <location>
        <begin position="287"/>
        <end position="290"/>
    </location>
</feature>
<feature type="compositionally biased region" description="Low complexity" evidence="4">
    <location>
        <begin position="10"/>
        <end position="23"/>
    </location>
</feature>
<feature type="compositionally biased region" description="Basic and acidic residues" evidence="4">
    <location>
        <begin position="25"/>
        <end position="36"/>
    </location>
</feature>
<keyword id="KW-0238">DNA-binding</keyword>
<keyword id="KW-0539">Nucleus</keyword>
<keyword id="KW-1185">Reference proteome</keyword>
<keyword id="KW-0678">Repressor</keyword>
<keyword id="KW-0804">Transcription</keyword>
<keyword id="KW-0805">Transcription regulation</keyword>
<dbReference type="EMBL" id="AF032966">
    <property type="protein sequence ID" value="AAB88691.1"/>
    <property type="molecule type" value="mRNA"/>
</dbReference>
<dbReference type="SMR" id="O57337"/>
<dbReference type="ELM" id="O57337"/>
<dbReference type="FunCoup" id="O57337">
    <property type="interactions" value="69"/>
</dbReference>
<dbReference type="STRING" id="9031.ENSGALP00000058796"/>
<dbReference type="VEuPathDB" id="HostDB:geneid_395128"/>
<dbReference type="InParanoid" id="O57337"/>
<dbReference type="OrthoDB" id="6085656at2759"/>
<dbReference type="PhylomeDB" id="O57337"/>
<dbReference type="Proteomes" id="UP000000539">
    <property type="component" value="Unassembled WGS sequence"/>
</dbReference>
<dbReference type="GO" id="GO:0005634">
    <property type="term" value="C:nucleus"/>
    <property type="evidence" value="ECO:0000318"/>
    <property type="project" value="GO_Central"/>
</dbReference>
<dbReference type="GO" id="GO:0046982">
    <property type="term" value="F:protein heterodimerization activity"/>
    <property type="evidence" value="ECO:0000314"/>
    <property type="project" value="MGI"/>
</dbReference>
<dbReference type="GO" id="GO:0042803">
    <property type="term" value="F:protein homodimerization activity"/>
    <property type="evidence" value="ECO:0000314"/>
    <property type="project" value="MGI"/>
</dbReference>
<dbReference type="GO" id="GO:0000978">
    <property type="term" value="F:RNA polymerase II cis-regulatory region sequence-specific DNA binding"/>
    <property type="evidence" value="ECO:0000318"/>
    <property type="project" value="GO_Central"/>
</dbReference>
<dbReference type="GO" id="GO:0045665">
    <property type="term" value="P:negative regulation of neuron differentiation"/>
    <property type="evidence" value="ECO:0000270"/>
    <property type="project" value="AgBase"/>
</dbReference>
<dbReference type="GO" id="GO:0006355">
    <property type="term" value="P:regulation of DNA-templated transcription"/>
    <property type="evidence" value="ECO:0007669"/>
    <property type="project" value="InterPro"/>
</dbReference>
<dbReference type="GO" id="GO:0050767">
    <property type="term" value="P:regulation of neurogenesis"/>
    <property type="evidence" value="ECO:0000318"/>
    <property type="project" value="GO_Central"/>
</dbReference>
<dbReference type="CDD" id="cd11459">
    <property type="entry name" value="bHLH-O_HES1_4"/>
    <property type="match status" value="1"/>
</dbReference>
<dbReference type="FunFam" id="4.10.280.10:FF:000009">
    <property type="entry name" value="Transcription factor HES-1"/>
    <property type="match status" value="1"/>
</dbReference>
<dbReference type="Gene3D" id="6.10.250.980">
    <property type="match status" value="1"/>
</dbReference>
<dbReference type="Gene3D" id="4.10.280.10">
    <property type="entry name" value="Helix-loop-helix DNA-binding domain"/>
    <property type="match status" value="1"/>
</dbReference>
<dbReference type="InterPro" id="IPR011598">
    <property type="entry name" value="bHLH_dom"/>
</dbReference>
<dbReference type="InterPro" id="IPR050370">
    <property type="entry name" value="HES_HEY"/>
</dbReference>
<dbReference type="InterPro" id="IPR036638">
    <property type="entry name" value="HLH_DNA-bd_sf"/>
</dbReference>
<dbReference type="InterPro" id="IPR003650">
    <property type="entry name" value="Orange_dom"/>
</dbReference>
<dbReference type="PANTHER" id="PTHR10985">
    <property type="entry name" value="BASIC HELIX-LOOP-HELIX TRANSCRIPTION FACTOR, HES-RELATED"/>
    <property type="match status" value="1"/>
</dbReference>
<dbReference type="Pfam" id="PF07527">
    <property type="entry name" value="Hairy_orange"/>
    <property type="match status" value="1"/>
</dbReference>
<dbReference type="Pfam" id="PF00010">
    <property type="entry name" value="HLH"/>
    <property type="match status" value="1"/>
</dbReference>
<dbReference type="SMART" id="SM00353">
    <property type="entry name" value="HLH"/>
    <property type="match status" value="1"/>
</dbReference>
<dbReference type="SMART" id="SM00511">
    <property type="entry name" value="ORANGE"/>
    <property type="match status" value="1"/>
</dbReference>
<dbReference type="SUPFAM" id="SSF47459">
    <property type="entry name" value="HLH, helix-loop-helix DNA-binding domain"/>
    <property type="match status" value="1"/>
</dbReference>
<dbReference type="SUPFAM" id="SSF158457">
    <property type="entry name" value="Orange domain-like"/>
    <property type="match status" value="1"/>
</dbReference>
<dbReference type="PROSITE" id="PS50888">
    <property type="entry name" value="BHLH"/>
    <property type="match status" value="1"/>
</dbReference>
<dbReference type="PROSITE" id="PS51054">
    <property type="entry name" value="ORANGE"/>
    <property type="match status" value="1"/>
</dbReference>
<name>HES1_CHICK</name>
<organism>
    <name type="scientific">Gallus gallus</name>
    <name type="common">Chicken</name>
    <dbReference type="NCBI Taxonomy" id="9031"/>
    <lineage>
        <taxon>Eukaryota</taxon>
        <taxon>Metazoa</taxon>
        <taxon>Chordata</taxon>
        <taxon>Craniata</taxon>
        <taxon>Vertebrata</taxon>
        <taxon>Euteleostomi</taxon>
        <taxon>Archelosauria</taxon>
        <taxon>Archosauria</taxon>
        <taxon>Dinosauria</taxon>
        <taxon>Saurischia</taxon>
        <taxon>Theropoda</taxon>
        <taxon>Coelurosauria</taxon>
        <taxon>Aves</taxon>
        <taxon>Neognathae</taxon>
        <taxon>Galloanserae</taxon>
        <taxon>Galliformes</taxon>
        <taxon>Phasianidae</taxon>
        <taxon>Phasianinae</taxon>
        <taxon>Gallus</taxon>
    </lineage>
</organism>
<sequence>MPADTGMEKPTASPIAGAPASASHTPDKPRSASEHRKSSKPIMEKRRRARINESLGQLKMLILDALKKDSSRHSKLEKADILEMTVKHLRNLQRAQMAAALSADPSVLGKYRAGFNECMNEVTRFLSTCEGVNADVRARLLGHLSACLGQIVAMNYLPPPPAGQPAHLAQPLHVQLPPTTTGAVPVPCKLEPTEALSPKVYGGFQLVPATDGQFAFLIPNPAFPPGSGPVIPLYANANVPVSTAWRSSERVHPPAGIPGAGLDIIWARVVPASQAGSPIAERREAVWRPW</sequence>
<reference key="1">
    <citation type="journal article" date="1997" name="Cell">
        <title>Avian hairy gene expression identifies a molecular clock linked to vertebrate segmentation and somitogenesis.</title>
        <authorList>
            <person name="Palmeirim I."/>
            <person name="Henrique D."/>
            <person name="Ish-Horowicz D."/>
            <person name="Pourquie O."/>
        </authorList>
    </citation>
    <scope>NUCLEOTIDE SEQUENCE [MRNA]</scope>
    <source>
        <tissue>Embryo</tissue>
    </source>
</reference>
<comment type="function">
    <text evidence="1">Transcriptional repressor of genes that require a bHLH protein for their transcription. May act as a negative regulator of myogenesis by inhibiting the functions of MYOD1 and ASH1 (By similarity).</text>
</comment>
<comment type="subunit">
    <text evidence="1">Transcription repression requires formation of a complex with a corepressor protein of the Groucho/TLE family.</text>
</comment>
<comment type="subcellular location">
    <subcellularLocation>
        <location evidence="5">Nucleus</location>
    </subcellularLocation>
</comment>
<comment type="developmental stage">
    <text>Strongly expressed in the presomitic mesoderm, where its mRNA exhibits cyclic waves of expression whose temporal periodicity corresponds to the formation time of one somite (90 minutes).</text>
</comment>
<comment type="domain">
    <text>Has a particular type of basic domain (presence of a helix-interrupting proline) that binds to the N-box (CACNAG), rather than the canonical E-box (CANNTG).</text>
</comment>
<comment type="domain">
    <text evidence="1">The C-terminal WRPW motif is a transcriptional repression domain necessary for the interaction with Groucho/TLE family members, transcriptional corepressors recruited to specific target DNA by Hairy-related proteins.</text>
</comment>
<comment type="domain">
    <text evidence="1">The bHLH, as well as cooperation between the central Orange domain and the C-terminal WRPW motif, is required for transcriptional repressor activity.</text>
</comment>
<proteinExistence type="evidence at transcript level"/>
<protein>
    <recommendedName>
        <fullName>Transcription factor HES-1</fullName>
    </recommendedName>
    <alternativeName>
        <fullName>C-HAIRY1</fullName>
    </alternativeName>
    <alternativeName>
        <fullName>Hairy and enhancer of split 1</fullName>
    </alternativeName>
</protein>
<accession>O57337</accession>
<evidence type="ECO:0000250" key="1"/>
<evidence type="ECO:0000255" key="2">
    <source>
        <dbReference type="PROSITE-ProRule" id="PRU00380"/>
    </source>
</evidence>
<evidence type="ECO:0000255" key="3">
    <source>
        <dbReference type="PROSITE-ProRule" id="PRU00981"/>
    </source>
</evidence>
<evidence type="ECO:0000256" key="4">
    <source>
        <dbReference type="SAM" id="MobiDB-lite"/>
    </source>
</evidence>
<evidence type="ECO:0000305" key="5"/>
<gene>
    <name type="primary">HES1</name>
    <name type="synonym">HAIRY1</name>
</gene>